<dbReference type="EMBL" id="AF076051">
    <property type="protein sequence ID" value="AAC68608.1"/>
    <property type="molecule type" value="Genomic_DNA"/>
</dbReference>
<dbReference type="SMR" id="O79198"/>
<dbReference type="OrthoDB" id="2149840at2759"/>
<dbReference type="GO" id="GO:0005743">
    <property type="term" value="C:mitochondrial inner membrane"/>
    <property type="evidence" value="ECO:0007669"/>
    <property type="project" value="UniProtKB-SubCell"/>
</dbReference>
<dbReference type="GO" id="GO:0045275">
    <property type="term" value="C:respiratory chain complex III"/>
    <property type="evidence" value="ECO:0007669"/>
    <property type="project" value="InterPro"/>
</dbReference>
<dbReference type="GO" id="GO:0046872">
    <property type="term" value="F:metal ion binding"/>
    <property type="evidence" value="ECO:0007669"/>
    <property type="project" value="UniProtKB-KW"/>
</dbReference>
<dbReference type="GO" id="GO:0008121">
    <property type="term" value="F:ubiquinol-cytochrome-c reductase activity"/>
    <property type="evidence" value="ECO:0007669"/>
    <property type="project" value="InterPro"/>
</dbReference>
<dbReference type="GO" id="GO:0006122">
    <property type="term" value="P:mitochondrial electron transport, ubiquinol to cytochrome c"/>
    <property type="evidence" value="ECO:0007669"/>
    <property type="project" value="TreeGrafter"/>
</dbReference>
<dbReference type="CDD" id="cd00290">
    <property type="entry name" value="cytochrome_b_C"/>
    <property type="match status" value="1"/>
</dbReference>
<dbReference type="CDD" id="cd00284">
    <property type="entry name" value="Cytochrome_b_N"/>
    <property type="match status" value="1"/>
</dbReference>
<dbReference type="FunFam" id="1.20.810.10:FF:000002">
    <property type="entry name" value="Cytochrome b"/>
    <property type="match status" value="1"/>
</dbReference>
<dbReference type="Gene3D" id="1.20.810.10">
    <property type="entry name" value="Cytochrome Bc1 Complex, Chain C"/>
    <property type="match status" value="1"/>
</dbReference>
<dbReference type="InterPro" id="IPR005798">
    <property type="entry name" value="Cyt_b/b6_C"/>
</dbReference>
<dbReference type="InterPro" id="IPR036150">
    <property type="entry name" value="Cyt_b/b6_C_sf"/>
</dbReference>
<dbReference type="InterPro" id="IPR005797">
    <property type="entry name" value="Cyt_b/b6_N"/>
</dbReference>
<dbReference type="InterPro" id="IPR027387">
    <property type="entry name" value="Cytb/b6-like_sf"/>
</dbReference>
<dbReference type="InterPro" id="IPR030689">
    <property type="entry name" value="Cytochrome_b"/>
</dbReference>
<dbReference type="InterPro" id="IPR048260">
    <property type="entry name" value="Cytochrome_b_C_euk/bac"/>
</dbReference>
<dbReference type="InterPro" id="IPR048259">
    <property type="entry name" value="Cytochrome_b_N_euk/bac"/>
</dbReference>
<dbReference type="InterPro" id="IPR016174">
    <property type="entry name" value="Di-haem_cyt_TM"/>
</dbReference>
<dbReference type="PANTHER" id="PTHR19271">
    <property type="entry name" value="CYTOCHROME B"/>
    <property type="match status" value="1"/>
</dbReference>
<dbReference type="PANTHER" id="PTHR19271:SF16">
    <property type="entry name" value="CYTOCHROME B"/>
    <property type="match status" value="1"/>
</dbReference>
<dbReference type="Pfam" id="PF00032">
    <property type="entry name" value="Cytochrom_B_C"/>
    <property type="match status" value="1"/>
</dbReference>
<dbReference type="Pfam" id="PF00033">
    <property type="entry name" value="Cytochrome_B"/>
    <property type="match status" value="1"/>
</dbReference>
<dbReference type="PIRSF" id="PIRSF038885">
    <property type="entry name" value="COB"/>
    <property type="match status" value="1"/>
</dbReference>
<dbReference type="SUPFAM" id="SSF81648">
    <property type="entry name" value="a domain/subunit of cytochrome bc1 complex (Ubiquinol-cytochrome c reductase)"/>
    <property type="match status" value="1"/>
</dbReference>
<dbReference type="SUPFAM" id="SSF81342">
    <property type="entry name" value="Transmembrane di-heme cytochromes"/>
    <property type="match status" value="1"/>
</dbReference>
<dbReference type="PROSITE" id="PS51003">
    <property type="entry name" value="CYTB_CTER"/>
    <property type="match status" value="1"/>
</dbReference>
<dbReference type="PROSITE" id="PS51002">
    <property type="entry name" value="CYTB_NTER"/>
    <property type="match status" value="1"/>
</dbReference>
<gene>
    <name type="primary">MT-CYB</name>
    <name type="synonym">COB</name>
    <name type="synonym">CYTB</name>
    <name type="synonym">MTCYB</name>
</gene>
<evidence type="ECO:0000250" key="1"/>
<evidence type="ECO:0000250" key="2">
    <source>
        <dbReference type="UniProtKB" id="P00157"/>
    </source>
</evidence>
<evidence type="ECO:0000255" key="3">
    <source>
        <dbReference type="PROSITE-ProRule" id="PRU00967"/>
    </source>
</evidence>
<evidence type="ECO:0000255" key="4">
    <source>
        <dbReference type="PROSITE-ProRule" id="PRU00968"/>
    </source>
</evidence>
<comment type="function">
    <text evidence="2">Component of the ubiquinol-cytochrome c reductase complex (complex III or cytochrome b-c1 complex) that is part of the mitochondrial respiratory chain. The b-c1 complex mediates electron transfer from ubiquinol to cytochrome c. Contributes to the generation of a proton gradient across the mitochondrial membrane that is then used for ATP synthesis.</text>
</comment>
<comment type="cofactor">
    <cofactor evidence="2">
        <name>heme b</name>
        <dbReference type="ChEBI" id="CHEBI:60344"/>
    </cofactor>
    <text evidence="2">Binds 2 heme b groups non-covalently.</text>
</comment>
<comment type="subunit">
    <text evidence="2">The cytochrome bc1 complex contains 11 subunits: 3 respiratory subunits (MT-CYB, CYC1 and UQCRFS1), 2 core proteins (UQCRC1 and UQCRC2) and 6 low-molecular weight proteins (UQCRH/QCR6, UQCRB/QCR7, UQCRQ/QCR8, UQCR10/QCR9, UQCR11/QCR10 and a cleavage product of UQCRFS1). This cytochrome bc1 complex then forms a dimer.</text>
</comment>
<comment type="subcellular location">
    <subcellularLocation>
        <location evidence="2">Mitochondrion inner membrane</location>
        <topology evidence="2">Multi-pass membrane protein</topology>
    </subcellularLocation>
</comment>
<comment type="miscellaneous">
    <text evidence="1">Heme 1 (or BL or b562) is low-potential and absorbs at about 562 nm, and heme 2 (or BH or b566) is high-potential and absorbs at about 566 nm.</text>
</comment>
<comment type="similarity">
    <text evidence="3 4">Belongs to the cytochrome b family.</text>
</comment>
<comment type="caution">
    <text evidence="2">The full-length protein contains only eight transmembrane helices, not nine as predicted by bioinformatics tools.</text>
</comment>
<reference key="1">
    <citation type="journal article" date="1998" name="Mol. Biol. Evol.">
        <title>Body size effects and rates of cytochrome-b evolution in tube-nosed seabirds.</title>
        <authorList>
            <person name="Nunn G.B."/>
            <person name="Stanley S.E."/>
        </authorList>
    </citation>
    <scope>NUCLEOTIDE SEQUENCE [GENOMIC DNA]</scope>
    <source>
        <strain>Isolate RP-G-1</strain>
    </source>
</reference>
<organism>
    <name type="scientific">Eudyptes chrysocome</name>
    <name type="common">Western rockhopper penguin</name>
    <name type="synonym">Aptenodytes chrysocome</name>
    <dbReference type="NCBI Taxonomy" id="79626"/>
    <lineage>
        <taxon>Eukaryota</taxon>
        <taxon>Metazoa</taxon>
        <taxon>Chordata</taxon>
        <taxon>Craniata</taxon>
        <taxon>Vertebrata</taxon>
        <taxon>Euteleostomi</taxon>
        <taxon>Archelosauria</taxon>
        <taxon>Archosauria</taxon>
        <taxon>Dinosauria</taxon>
        <taxon>Saurischia</taxon>
        <taxon>Theropoda</taxon>
        <taxon>Coelurosauria</taxon>
        <taxon>Aves</taxon>
        <taxon>Neognathae</taxon>
        <taxon>Neoaves</taxon>
        <taxon>Aequornithes</taxon>
        <taxon>Sphenisciformes</taxon>
        <taxon>Spheniscidae</taxon>
        <taxon>Eudyptes</taxon>
    </lineage>
</organism>
<protein>
    <recommendedName>
        <fullName>Cytochrome b</fullName>
    </recommendedName>
    <alternativeName>
        <fullName>Complex III subunit 3</fullName>
    </alternativeName>
    <alternativeName>
        <fullName>Complex III subunit III</fullName>
    </alternativeName>
    <alternativeName>
        <fullName>Cytochrome b-c1 complex subunit 3</fullName>
    </alternativeName>
    <alternativeName>
        <fullName>Ubiquinol-cytochrome-c reductase complex cytochrome b subunit</fullName>
    </alternativeName>
</protein>
<proteinExistence type="inferred from homology"/>
<sequence>MAPNLRKSHPLLKTINNSLIDLPTPSNISAWWNFGSLLGICLATQILTGLLLAAHYTADTTLAFSSVAHTCRNVQYGWLIRNLHANGASFFFICIYLHIGRGLYYGSYLYKETWNTGIILLLTLMATAFVGYVLPWGQMSFWGATVITNLFSAIPYIGQTLVEWAWGGFSVDNPTLTRFFTLHFLLPFMIAGLTLIHLTFLHESGSNNPLGIVANSDKIPFHPYYSTKDILGFILLLLPLTTLALFSPNLLGDPENFTPANPLVTPPHIKPEWYFLFAYAILRSIPNKLGGVLALAASVLILFLIPLLHKSKQRTMTFRPLSQLLFWTLVANLTILTWIGSQPVEHPFIIIGQLASLTYFTILLILFPLIGTLENKMLNH</sequence>
<geneLocation type="mitochondrion"/>
<feature type="chain" id="PRO_0000060951" description="Cytochrome b">
    <location>
        <begin position="1"/>
        <end position="380"/>
    </location>
</feature>
<feature type="transmembrane region" description="Helical" evidence="2">
    <location>
        <begin position="34"/>
        <end position="54"/>
    </location>
</feature>
<feature type="transmembrane region" description="Helical" evidence="2">
    <location>
        <begin position="78"/>
        <end position="99"/>
    </location>
</feature>
<feature type="transmembrane region" description="Helical" evidence="2">
    <location>
        <begin position="114"/>
        <end position="134"/>
    </location>
</feature>
<feature type="transmembrane region" description="Helical" evidence="2">
    <location>
        <begin position="179"/>
        <end position="199"/>
    </location>
</feature>
<feature type="transmembrane region" description="Helical" evidence="2">
    <location>
        <begin position="227"/>
        <end position="247"/>
    </location>
</feature>
<feature type="transmembrane region" description="Helical" evidence="2">
    <location>
        <begin position="289"/>
        <end position="309"/>
    </location>
</feature>
<feature type="transmembrane region" description="Helical" evidence="2">
    <location>
        <begin position="321"/>
        <end position="341"/>
    </location>
</feature>
<feature type="transmembrane region" description="Helical" evidence="2">
    <location>
        <begin position="348"/>
        <end position="368"/>
    </location>
</feature>
<feature type="binding site" description="axial binding residue" evidence="2">
    <location>
        <position position="84"/>
    </location>
    <ligand>
        <name>heme b</name>
        <dbReference type="ChEBI" id="CHEBI:60344"/>
        <label>b562</label>
    </ligand>
    <ligandPart>
        <name>Fe</name>
        <dbReference type="ChEBI" id="CHEBI:18248"/>
    </ligandPart>
</feature>
<feature type="binding site" description="axial binding residue" evidence="2">
    <location>
        <position position="98"/>
    </location>
    <ligand>
        <name>heme b</name>
        <dbReference type="ChEBI" id="CHEBI:60344"/>
        <label>b566</label>
    </ligand>
    <ligandPart>
        <name>Fe</name>
        <dbReference type="ChEBI" id="CHEBI:18248"/>
    </ligandPart>
</feature>
<feature type="binding site" description="axial binding residue" evidence="2">
    <location>
        <position position="183"/>
    </location>
    <ligand>
        <name>heme b</name>
        <dbReference type="ChEBI" id="CHEBI:60344"/>
        <label>b562</label>
    </ligand>
    <ligandPart>
        <name>Fe</name>
        <dbReference type="ChEBI" id="CHEBI:18248"/>
    </ligandPart>
</feature>
<feature type="binding site" description="axial binding residue" evidence="2">
    <location>
        <position position="197"/>
    </location>
    <ligand>
        <name>heme b</name>
        <dbReference type="ChEBI" id="CHEBI:60344"/>
        <label>b566</label>
    </ligand>
    <ligandPart>
        <name>Fe</name>
        <dbReference type="ChEBI" id="CHEBI:18248"/>
    </ligandPart>
</feature>
<feature type="binding site" evidence="2">
    <location>
        <position position="202"/>
    </location>
    <ligand>
        <name>a ubiquinone</name>
        <dbReference type="ChEBI" id="CHEBI:16389"/>
    </ligand>
</feature>
<keyword id="KW-0249">Electron transport</keyword>
<keyword id="KW-0349">Heme</keyword>
<keyword id="KW-0408">Iron</keyword>
<keyword id="KW-0472">Membrane</keyword>
<keyword id="KW-0479">Metal-binding</keyword>
<keyword id="KW-0496">Mitochondrion</keyword>
<keyword id="KW-0999">Mitochondrion inner membrane</keyword>
<keyword id="KW-0679">Respiratory chain</keyword>
<keyword id="KW-0812">Transmembrane</keyword>
<keyword id="KW-1133">Transmembrane helix</keyword>
<keyword id="KW-0813">Transport</keyword>
<keyword id="KW-0830">Ubiquinone</keyword>
<name>CYB_EUDCH</name>
<accession>O79198</accession>